<protein>
    <recommendedName>
        <fullName>Forkhead box protein H1</fullName>
    </recommendedName>
    <alternativeName>
        <fullName>Forkhead activin signal transducer 1</fullName>
        <shortName>Fast-1</shortName>
        <shortName>xFAST-1</shortName>
    </alternativeName>
    <alternativeName>
        <fullName>XFoxH1a</fullName>
    </alternativeName>
</protein>
<sequence length="518" mass="57445">MRDPSSLYSGFPAGSQYESVEPPSLALLSSIDQEQLPVATGQSYNHSVQHWPQPWPPLSLYREGGTWSPDRGSMYGLSPGTHEGSCTHTHEGPKDSMAGDQTRSRKSKKKNYHRYNKPPYSYLAMIALVIQNSPEKRLKLSQILKEVSTLFPFFNGDYMGWKDSIRHNLSSSDCFKKILKDPGKPQAKGNFWTVDVSRIPLDAMKLQNTALTRGGSDYFVQDLAPYILHNYKYEHNAGAYGHQMPPSHARSLSLAEDSQQTNTGGKLNTSFMIDSLLHDLQEVDLPDASRNLENQRISPAVAMNNMWSSAPLLYTHSKPTRNARSPGLSTIHSTYSSSSSSISTISPVGFQKEQEKSGRQTQRVGHPIKRSREDDDCSTTSSDPDTGNYSPIEPPKKMPLLSLDLPTSYTKSVAPNVVAPPSVLPFFHFPRFTYYNYGPSPYMTPPYWGFPHPTNSGGDSPRGPQSPLDLDNMLRAMPPNKSVFDVLTSHPGDLVHPSFLSQCLGSSGSPYPSRQGLM</sequence>
<proteinExistence type="evidence at protein level"/>
<evidence type="ECO:0000255" key="1">
    <source>
        <dbReference type="PROSITE-ProRule" id="PRU00089"/>
    </source>
</evidence>
<evidence type="ECO:0000256" key="2">
    <source>
        <dbReference type="SAM" id="MobiDB-lite"/>
    </source>
</evidence>
<evidence type="ECO:0000269" key="3">
    <source>
    </source>
</evidence>
<evidence type="ECO:0000269" key="4">
    <source>
    </source>
</evidence>
<evidence type="ECO:0000269" key="5">
    <source>
    </source>
</evidence>
<evidence type="ECO:0000269" key="6">
    <source>
    </source>
</evidence>
<evidence type="ECO:0000269" key="7">
    <source>
    </source>
</evidence>
<evidence type="ECO:0000269" key="8">
    <source>
    </source>
</evidence>
<evidence type="ECO:0000269" key="9">
    <source>
    </source>
</evidence>
<evidence type="ECO:0000269" key="10">
    <source>
    </source>
</evidence>
<evidence type="ECO:0000269" key="11">
    <source>
    </source>
</evidence>
<evidence type="ECO:0000269" key="12">
    <source>
    </source>
</evidence>
<evidence type="ECO:0000305" key="13"/>
<evidence type="ECO:0007829" key="14">
    <source>
        <dbReference type="PDB" id="7YZG"/>
    </source>
</evidence>
<dbReference type="EMBL" id="U70980">
    <property type="protein sequence ID" value="AAC60219.1"/>
    <property type="molecule type" value="mRNA"/>
</dbReference>
<dbReference type="EMBL" id="BC160705">
    <property type="protein sequence ID" value="AAI60705.1"/>
    <property type="molecule type" value="mRNA"/>
</dbReference>
<dbReference type="RefSeq" id="NP_001081820.1">
    <property type="nucleotide sequence ID" value="NM_001088351.1"/>
</dbReference>
<dbReference type="PDB" id="7YZG">
    <property type="method" value="X-ray"/>
    <property type="resolution" value="2.82 A"/>
    <property type="chains" value="A=97-236"/>
</dbReference>
<dbReference type="PDBsum" id="7YZG"/>
<dbReference type="SMR" id="P70056"/>
<dbReference type="IntAct" id="P70056">
    <property type="interactions" value="2"/>
</dbReference>
<dbReference type="GeneID" id="398070"/>
<dbReference type="KEGG" id="xla:398070"/>
<dbReference type="AGR" id="Xenbase:XB-GENE-1194377"/>
<dbReference type="CTD" id="398070"/>
<dbReference type="Xenbase" id="XB-GENE-1194377">
    <property type="gene designation" value="foxh1.L"/>
</dbReference>
<dbReference type="OrthoDB" id="5954824at2759"/>
<dbReference type="Proteomes" id="UP000186698">
    <property type="component" value="Chromosome 6L"/>
</dbReference>
<dbReference type="GO" id="GO:0032444">
    <property type="term" value="C:activin responsive factor complex"/>
    <property type="evidence" value="ECO:0000314"/>
    <property type="project" value="UniProtKB"/>
</dbReference>
<dbReference type="GO" id="GO:0005634">
    <property type="term" value="C:nucleus"/>
    <property type="evidence" value="ECO:0000314"/>
    <property type="project" value="UniProtKB"/>
</dbReference>
<dbReference type="GO" id="GO:0001228">
    <property type="term" value="F:DNA-binding transcription activator activity, RNA polymerase II-specific"/>
    <property type="evidence" value="ECO:0000318"/>
    <property type="project" value="GO_Central"/>
</dbReference>
<dbReference type="GO" id="GO:0061629">
    <property type="term" value="F:RNA polymerase II-specific DNA-binding transcription factor binding"/>
    <property type="evidence" value="ECO:0000353"/>
    <property type="project" value="UniProtKB"/>
</dbReference>
<dbReference type="GO" id="GO:0043565">
    <property type="term" value="F:sequence-specific DNA binding"/>
    <property type="evidence" value="ECO:0000314"/>
    <property type="project" value="UniProtKB"/>
</dbReference>
<dbReference type="GO" id="GO:0046332">
    <property type="term" value="F:SMAD binding"/>
    <property type="evidence" value="ECO:0000314"/>
    <property type="project" value="UniProtKB"/>
</dbReference>
<dbReference type="GO" id="GO:0000976">
    <property type="term" value="F:transcription cis-regulatory region binding"/>
    <property type="evidence" value="ECO:0000314"/>
    <property type="project" value="UniProtKB"/>
</dbReference>
<dbReference type="GO" id="GO:0032924">
    <property type="term" value="P:activin receptor signaling pathway"/>
    <property type="evidence" value="ECO:0000315"/>
    <property type="project" value="UniProtKB"/>
</dbReference>
<dbReference type="GO" id="GO:0071345">
    <property type="term" value="P:cellular response to cytokine stimulus"/>
    <property type="evidence" value="ECO:0000250"/>
    <property type="project" value="UniProtKB"/>
</dbReference>
<dbReference type="GO" id="GO:0001702">
    <property type="term" value="P:gastrulation with mouth forming second"/>
    <property type="evidence" value="ECO:0000315"/>
    <property type="project" value="UniProtKB"/>
</dbReference>
<dbReference type="GO" id="GO:0070986">
    <property type="term" value="P:left/right axis specification"/>
    <property type="evidence" value="ECO:0000315"/>
    <property type="project" value="Xenbase"/>
</dbReference>
<dbReference type="GO" id="GO:0007501">
    <property type="term" value="P:mesodermal cell fate specification"/>
    <property type="evidence" value="ECO:0000315"/>
    <property type="project" value="UniProtKB"/>
</dbReference>
<dbReference type="GO" id="GO:0045893">
    <property type="term" value="P:positive regulation of DNA-templated transcription"/>
    <property type="evidence" value="ECO:0000314"/>
    <property type="project" value="UniProtKB"/>
</dbReference>
<dbReference type="GO" id="GO:0045944">
    <property type="term" value="P:positive regulation of transcription by RNA polymerase II"/>
    <property type="evidence" value="ECO:0000314"/>
    <property type="project" value="UniProtKB"/>
</dbReference>
<dbReference type="GO" id="GO:0007179">
    <property type="term" value="P:transforming growth factor beta receptor signaling pathway"/>
    <property type="evidence" value="ECO:0000314"/>
    <property type="project" value="UniProtKB"/>
</dbReference>
<dbReference type="CDD" id="cd20022">
    <property type="entry name" value="FH_FOXH"/>
    <property type="match status" value="1"/>
</dbReference>
<dbReference type="FunFam" id="1.10.10.10:FF:000278">
    <property type="entry name" value="Forkhead box protein H1"/>
    <property type="match status" value="1"/>
</dbReference>
<dbReference type="Gene3D" id="1.10.10.10">
    <property type="entry name" value="Winged helix-like DNA-binding domain superfamily/Winged helix DNA-binding domain"/>
    <property type="match status" value="1"/>
</dbReference>
<dbReference type="InterPro" id="IPR052327">
    <property type="entry name" value="Activin_resp_transcr_regulator"/>
</dbReference>
<dbReference type="InterPro" id="IPR047511">
    <property type="entry name" value="FH_FOXH1"/>
</dbReference>
<dbReference type="InterPro" id="IPR001766">
    <property type="entry name" value="Fork_head_dom"/>
</dbReference>
<dbReference type="InterPro" id="IPR030456">
    <property type="entry name" value="TF_fork_head_CS_2"/>
</dbReference>
<dbReference type="InterPro" id="IPR036388">
    <property type="entry name" value="WH-like_DNA-bd_sf"/>
</dbReference>
<dbReference type="InterPro" id="IPR036390">
    <property type="entry name" value="WH_DNA-bd_sf"/>
</dbReference>
<dbReference type="PANTHER" id="PTHR47316">
    <property type="entry name" value="FORKHEAD BOX PROTEIN H1"/>
    <property type="match status" value="1"/>
</dbReference>
<dbReference type="PANTHER" id="PTHR47316:SF2">
    <property type="entry name" value="FORKHEAD BOX PROTEIN H1"/>
    <property type="match status" value="1"/>
</dbReference>
<dbReference type="Pfam" id="PF00250">
    <property type="entry name" value="Forkhead"/>
    <property type="match status" value="1"/>
</dbReference>
<dbReference type="PRINTS" id="PR00053">
    <property type="entry name" value="FORKHEAD"/>
</dbReference>
<dbReference type="SMART" id="SM00339">
    <property type="entry name" value="FH"/>
    <property type="match status" value="1"/>
</dbReference>
<dbReference type="SUPFAM" id="SSF46785">
    <property type="entry name" value="Winged helix' DNA-binding domain"/>
    <property type="match status" value="1"/>
</dbReference>
<dbReference type="PROSITE" id="PS00658">
    <property type="entry name" value="FORK_HEAD_2"/>
    <property type="match status" value="1"/>
</dbReference>
<dbReference type="PROSITE" id="PS50039">
    <property type="entry name" value="FORK_HEAD_3"/>
    <property type="match status" value="1"/>
</dbReference>
<comment type="function">
    <text evidence="3 4 5 7 8 11 12">Transcriptional activator. Recognizes and binds to the DNA sequence 5'-TGT[GT][GT]ATT-3'. Upon TGF-beta induction, forms a transcriptionally active complex with smad2 and smad4 called activin-responsive factor 1 (ARF1), which binds a site on the mix-B/mix.2 promoter called the activin response element (ARE). Binds to activated smads and the ARE with much lower affinity than fast3. Necessary for the first steps in mesoderm specification, directly inducing mesodermal genes. Acts with fast3 to control the convergent extension movements of gastrulation. Binds to the proximal element (PE) of the gsc gene and cooperates with gtf2ird1/wbscr11 and SMAD proteins to regulate gsc transcription.</text>
</comment>
<comment type="subunit">
    <text evidence="3 6 7 8 9 10 11 12">ARF1 contains 2 smad2s, 1 smad4 and 1 foxh1/fast-1 protein. Interaction with smad4 is most likely indirect through interaction with the MH2 domain of smad2. Binds to the MH2 domain of smad3, which can incorporate into the ARF1 complex. The ARF1 and ARF2 complexes are activated by distinct TGF-beta family members; formation of ARF1 is promoted by activin. Interacts (via Fork-head domain) with gtf2ird1/wbscr11 (via repeats 4-5).</text>
</comment>
<comment type="interaction">
    <interactant intactId="EBI-9969973">
        <id>P70056</id>
    </interactant>
    <interactant intactId="EBI-1040141">
        <id>Q15796</id>
        <label>SMAD2</label>
    </interactant>
    <organismsDiffer>true</organismsDiffer>
    <experiments>4</experiments>
</comment>
<comment type="interaction">
    <interactant intactId="EBI-9969973">
        <id>P70056</id>
    </interactant>
    <interactant intactId="EBI-347263">
        <id>Q13485</id>
        <label>SMAD4</label>
    </interactant>
    <organismsDiffer>true</organismsDiffer>
    <experiments>2</experiments>
</comment>
<comment type="subcellular location">
    <subcellularLocation>
        <location evidence="1 11">Nucleus</location>
    </subcellularLocation>
</comment>
<comment type="tissue specificity">
    <text evidence="8">Highly expressed in the animal cap (prospective ectoderm) and prospective mesoderm of stage 10.25 embryos.</text>
</comment>
<comment type="developmental stage">
    <text evidence="11">Expressed both maternally and zygotically. Present in oocytes and in early embryos until shortly after gastrulation, after which levels decline and remain low through tadpole development.</text>
</comment>
<comment type="domain">
    <text>The FM region is required for binding smad2/smad4 complexes. FM2 is more effective than FM1 and only interacts with phosphorylated smad2 that is in an activated smad complex.</text>
</comment>
<keyword id="KW-0002">3D-structure</keyword>
<keyword id="KW-0010">Activator</keyword>
<keyword id="KW-0217">Developmental protein</keyword>
<keyword id="KW-0238">DNA-binding</keyword>
<keyword id="KW-0306">Gastrulation</keyword>
<keyword id="KW-0539">Nucleus</keyword>
<keyword id="KW-1185">Reference proteome</keyword>
<keyword id="KW-0804">Transcription</keyword>
<keyword id="KW-0805">Transcription regulation</keyword>
<organism>
    <name type="scientific">Xenopus laevis</name>
    <name type="common">African clawed frog</name>
    <dbReference type="NCBI Taxonomy" id="8355"/>
    <lineage>
        <taxon>Eukaryota</taxon>
        <taxon>Metazoa</taxon>
        <taxon>Chordata</taxon>
        <taxon>Craniata</taxon>
        <taxon>Vertebrata</taxon>
        <taxon>Euteleostomi</taxon>
        <taxon>Amphibia</taxon>
        <taxon>Batrachia</taxon>
        <taxon>Anura</taxon>
        <taxon>Pipoidea</taxon>
        <taxon>Pipidae</taxon>
        <taxon>Xenopodinae</taxon>
        <taxon>Xenopus</taxon>
        <taxon>Xenopus</taxon>
    </lineage>
</organism>
<feature type="chain" id="PRO_0000091845" description="Forkhead box protein H1">
    <location>
        <begin position="1"/>
        <end position="518"/>
    </location>
</feature>
<feature type="DNA-binding region" description="Fork-head" evidence="1">
    <location>
        <begin position="117"/>
        <end position="213"/>
    </location>
</feature>
<feature type="region of interest" description="Disordered" evidence="2">
    <location>
        <begin position="72"/>
        <end position="113"/>
    </location>
</feature>
<feature type="region of interest" description="Disordered" evidence="2">
    <location>
        <begin position="318"/>
        <end position="397"/>
    </location>
</feature>
<feature type="region of interest" description="SMAD-interaction domain (SID)">
    <location>
        <begin position="380"/>
        <end position="506"/>
    </location>
</feature>
<feature type="short sequence motif" description="Fast/FoxH1 motif 1 (FM1)">
    <location>
        <begin position="405"/>
        <end position="409"/>
    </location>
</feature>
<feature type="short sequence motif" description="Fast/FoxH1 motif 2 (FM2)">
    <location>
        <begin position="415"/>
        <end position="421"/>
    </location>
</feature>
<feature type="short sequence motif" description="SMAD interaction motif (SIM)">
    <location>
        <begin position="470"/>
        <end position="491"/>
    </location>
</feature>
<feature type="compositionally biased region" description="Basic residues" evidence="2">
    <location>
        <begin position="104"/>
        <end position="113"/>
    </location>
</feature>
<feature type="compositionally biased region" description="Low complexity" evidence="2">
    <location>
        <begin position="329"/>
        <end position="346"/>
    </location>
</feature>
<feature type="sequence conflict" description="In Ref. 1; AAC60219." evidence="13" ref="1">
    <original>H</original>
    <variation>P</variation>
    <location>
        <position position="50"/>
    </location>
</feature>
<feature type="sequence conflict" description="In Ref. 1; AAC60219." evidence="13" ref="1">
    <original>Q</original>
    <variation>H</variation>
    <location>
        <position position="101"/>
    </location>
</feature>
<feature type="sequence conflict" description="In Ref. 1; AAC60219." evidence="13" ref="1">
    <original>N</original>
    <variation>Y</variation>
    <location>
        <position position="116"/>
    </location>
</feature>
<feature type="helix" evidence="14">
    <location>
        <begin position="122"/>
        <end position="131"/>
    </location>
</feature>
<feature type="helix" evidence="14">
    <location>
        <begin position="140"/>
        <end position="150"/>
    </location>
</feature>
<feature type="helix" evidence="14">
    <location>
        <begin position="161"/>
        <end position="170"/>
    </location>
</feature>
<feature type="strand" evidence="14">
    <location>
        <begin position="175"/>
        <end position="177"/>
    </location>
</feature>
<feature type="strand" evidence="14">
    <location>
        <begin position="192"/>
        <end position="194"/>
    </location>
</feature>
<feature type="helix" evidence="14">
    <location>
        <begin position="196"/>
        <end position="198"/>
    </location>
</feature>
<feature type="helix" evidence="14">
    <location>
        <begin position="201"/>
        <end position="203"/>
    </location>
</feature>
<feature type="helix" evidence="14">
    <location>
        <begin position="210"/>
        <end position="212"/>
    </location>
</feature>
<feature type="helix" evidence="14">
    <location>
        <begin position="216"/>
        <end position="218"/>
    </location>
</feature>
<feature type="strand" evidence="14">
    <location>
        <begin position="221"/>
        <end position="223"/>
    </location>
</feature>
<feature type="helix" evidence="14">
    <location>
        <begin position="224"/>
        <end position="228"/>
    </location>
</feature>
<gene>
    <name type="primary">foxh1</name>
    <name type="synonym">fast-1</name>
    <name type="synonym">fast1</name>
    <name type="synonym">foxh1a</name>
</gene>
<reference key="1">
    <citation type="journal article" date="1996" name="Nature">
        <title>A transcriptional partner for MAD proteins in TGF-beta signalling.</title>
        <authorList>
            <person name="Chen X."/>
            <person name="Rubock M.J."/>
            <person name="Whitman M."/>
        </authorList>
    </citation>
    <scope>NUCLEOTIDE SEQUENCE [MRNA]</scope>
    <scope>FUNCTION</scope>
    <scope>IDENTIFICATION IN ARF1 COMPLEX</scope>
    <scope>SUBCELLULAR LOCATION</scope>
    <scope>DEVELOPMENTAL STAGE</scope>
    <source>
        <tissue>Oocyte</tissue>
    </source>
</reference>
<reference key="2">
    <citation type="submission" date="2008-03" db="EMBL/GenBank/DDBJ databases">
        <authorList>
            <consortium name="NIH - Xenopus Gene Collection (XGC) project"/>
        </authorList>
    </citation>
    <scope>NUCLEOTIDE SEQUENCE [LARGE SCALE MRNA]</scope>
    <source>
        <tissue>Ovary</tissue>
    </source>
</reference>
<reference key="3">
    <citation type="journal article" date="1997" name="Nature">
        <title>Smad4 and FAST-1 in the assembly of activin-responsive factor.</title>
        <authorList>
            <person name="Chen X."/>
            <person name="Weisberg E."/>
            <person name="Fridmacher V."/>
            <person name="Watanabe M."/>
            <person name="Naco G."/>
            <person name="Whitman M."/>
        </authorList>
    </citation>
    <scope>FUNCTION</scope>
    <scope>INTERACTION WITH SMAD2</scope>
    <scope>IDENTIFICATION IN ARF1 COMPLEX</scope>
    <scope>IDENTIFICATION OF SMAD INTERACTION DOMAIN</scope>
</reference>
<reference key="4">
    <citation type="journal article" date="1998" name="Mech. Dev.">
        <title>A mouse homologue of FAST-1 transduces TGF beta superfamily signals and is expressed during early embryogenesis.</title>
        <authorList>
            <person name="Weisberg E."/>
            <person name="Winnier G.E."/>
            <person name="Chen X."/>
            <person name="Farnsworth C.L."/>
            <person name="Hogan B.L.H."/>
            <person name="Whitman M."/>
        </authorList>
    </citation>
    <scope>FUNCTION</scope>
    <scope>INTERACTION WITH SMAD2 AND SMAD3</scope>
</reference>
<reference key="5">
    <citation type="journal article" date="1999" name="Development">
        <title>FAST-1 is a key maternal effector of mesoderm inducers in the early Xenopus embryo.</title>
        <authorList>
            <person name="Watanabe M."/>
            <person name="Whitman M."/>
        </authorList>
    </citation>
    <scope>FUNCTION</scope>
</reference>
<reference key="6">
    <citation type="journal article" date="1999" name="J. Biol. Chem.">
        <title>The role of FAST-1 and Smads in transcriptional regulation by activin during early Xenopus embryogenesis.</title>
        <authorList>
            <person name="Yeo C.Y."/>
            <person name="Chen X."/>
            <person name="Whitman M."/>
        </authorList>
    </citation>
    <scope>FUNCTION</scope>
</reference>
<reference key="7">
    <citation type="journal article" date="2000" name="Genes Dev.">
        <title>Homeodomain and winged-helix transcription factors recruit activated Smads to distinct promoter elements via a common Smad interaction motif.</title>
        <authorList>
            <person name="Germain S."/>
            <person name="Howell M."/>
            <person name="Esslemont G.M."/>
            <person name="Hill C.S."/>
        </authorList>
    </citation>
    <scope>INTERACTION WITH SMAD2</scope>
    <scope>IDENTIFICATION OF SMAD INTERACTION MOTIF</scope>
</reference>
<reference key="8">
    <citation type="journal article" date="2002" name="Development">
        <title>A novel Xenopus Smad-interacting forkhead transcription factor (XFast-3) cooperates with XFast-1 in regulating gastrulation movements.</title>
        <authorList>
            <person name="Howell M."/>
            <person name="Inman G.J."/>
            <person name="Hill C.S."/>
        </authorList>
    </citation>
    <scope>FUNCTION</scope>
    <scope>SUBUNIT</scope>
    <scope>TISSUE SPECIFICITY</scope>
</reference>
<reference key="9">
    <citation type="journal article" date="2002" name="Genes Dev.">
        <title>The role of a Williams-Beuren syndrome-associated helix-loop-helix domain-containing transcription factor in activin/nodal signaling.</title>
        <authorList>
            <person name="Ring C."/>
            <person name="Ogata S."/>
            <person name="Meek L."/>
            <person name="Song J."/>
            <person name="Ohta T."/>
            <person name="Miyazono K."/>
            <person name="Cho K.W."/>
        </authorList>
    </citation>
    <scope>FUNCTION</scope>
    <scope>INTERACTION WITH GTF2IRD1</scope>
</reference>
<reference key="10">
    <citation type="journal article" date="2002" name="J. Biol. Chem.">
        <title>Stoichiometry of active smad-transcription factor complexes on DNA.</title>
        <authorList>
            <person name="Inman G.J."/>
            <person name="Hill C.S."/>
        </authorList>
    </citation>
    <scope>SUBUNIT</scope>
</reference>
<reference key="11">
    <citation type="journal article" date="2004" name="Mol. Cell. Biol.">
        <title>Recognition of phosphorylated-Smad2-containing complexes by a novel Smad interaction motif.</title>
        <authorList>
            <person name="Randall R.A."/>
            <person name="Howell M."/>
            <person name="Page C.S."/>
            <person name="Daly A."/>
            <person name="Bates P.A."/>
            <person name="Hill C.S."/>
        </authorList>
    </citation>
    <scope>INTERACTION WITH SMAD2</scope>
    <scope>IDENTIFICATION OF FAST/FOXH1 MOTIF</scope>
</reference>
<reference key="12">
    <citation type="journal article" date="2005" name="Gene">
        <title>Of fox and frogs: fox (fork head/winged helix) transcription factors in Xenopus development.</title>
        <authorList>
            <person name="Pohl B.S."/>
            <person name="Knoechel W."/>
        </authorList>
    </citation>
    <scope>REVIEW</scope>
</reference>
<name>FOXH1_XENLA</name>
<accession>P70056</accession>
<accession>B1H1R2</accession>